<evidence type="ECO:0000250" key="1">
    <source>
        <dbReference type="UniProtKB" id="Q9NQV8"/>
    </source>
</evidence>
<evidence type="ECO:0000255" key="2">
    <source>
        <dbReference type="PROSITE-ProRule" id="PRU00042"/>
    </source>
</evidence>
<evidence type="ECO:0000255" key="3">
    <source>
        <dbReference type="PROSITE-ProRule" id="PRU00190"/>
    </source>
</evidence>
<evidence type="ECO:0000256" key="4">
    <source>
        <dbReference type="SAM" id="MobiDB-lite"/>
    </source>
</evidence>
<evidence type="ECO:0000269" key="5">
    <source>
    </source>
</evidence>
<evidence type="ECO:0000269" key="6">
    <source>
    </source>
</evidence>
<evidence type="ECO:0000269" key="7">
    <source>
    </source>
</evidence>
<evidence type="ECO:0000305" key="8"/>
<evidence type="ECO:0000312" key="9">
    <source>
        <dbReference type="EMBL" id="AAI41021.1"/>
    </source>
</evidence>
<organism>
    <name type="scientific">Mus musculus</name>
    <name type="common">Mouse</name>
    <dbReference type="NCBI Taxonomy" id="10090"/>
    <lineage>
        <taxon>Eukaryota</taxon>
        <taxon>Metazoa</taxon>
        <taxon>Chordata</taxon>
        <taxon>Craniata</taxon>
        <taxon>Vertebrata</taxon>
        <taxon>Euteleostomi</taxon>
        <taxon>Mammalia</taxon>
        <taxon>Eutheria</taxon>
        <taxon>Euarchontoglires</taxon>
        <taxon>Glires</taxon>
        <taxon>Rodentia</taxon>
        <taxon>Myomorpha</taxon>
        <taxon>Muroidea</taxon>
        <taxon>Muridae</taxon>
        <taxon>Murinae</taxon>
        <taxon>Mus</taxon>
        <taxon>Mus</taxon>
    </lineage>
</organism>
<keyword id="KW-0238">DNA-binding</keyword>
<keyword id="KW-0479">Metal-binding</keyword>
<keyword id="KW-0489">Methyltransferase</keyword>
<keyword id="KW-0524">Neurogenesis</keyword>
<keyword id="KW-0539">Nucleus</keyword>
<keyword id="KW-1185">Reference proteome</keyword>
<keyword id="KW-0677">Repeat</keyword>
<keyword id="KW-0949">S-adenosyl-L-methionine</keyword>
<keyword id="KW-0804">Transcription</keyword>
<keyword id="KW-0805">Transcription regulation</keyword>
<keyword id="KW-0808">Transferase</keyword>
<keyword id="KW-0862">Zinc</keyword>
<keyword id="KW-0863">Zinc-finger</keyword>
<dbReference type="EC" id="2.1.1.-"/>
<dbReference type="EMBL" id="AK036202">
    <property type="protein sequence ID" value="BAC29345.1"/>
    <property type="status" value="ALT_FRAME"/>
    <property type="molecule type" value="mRNA"/>
</dbReference>
<dbReference type="EMBL" id="BC141020">
    <property type="protein sequence ID" value="AAI41021.1"/>
    <property type="molecule type" value="mRNA"/>
</dbReference>
<dbReference type="CCDS" id="CCDS39178.1"/>
<dbReference type="RefSeq" id="NP_001394923.1">
    <property type="nucleotide sequence ID" value="NM_001407994.1"/>
</dbReference>
<dbReference type="RefSeq" id="NP_001394924.1">
    <property type="nucleotide sequence ID" value="NM_001407995.1"/>
</dbReference>
<dbReference type="RefSeq" id="NP_001394925.1">
    <property type="nucleotide sequence ID" value="NM_001407996.1"/>
</dbReference>
<dbReference type="RefSeq" id="NP_084223.2">
    <property type="nucleotide sequence ID" value="NM_029947.3"/>
</dbReference>
<dbReference type="RefSeq" id="XP_006535347.1">
    <property type="nucleotide sequence ID" value="XM_006535284.5"/>
</dbReference>
<dbReference type="RefSeq" id="XP_011247896.1">
    <property type="nucleotide sequence ID" value="XM_011249594.2"/>
</dbReference>
<dbReference type="BioGRID" id="218812">
    <property type="interactions" value="1"/>
</dbReference>
<dbReference type="FunCoup" id="Q8BZ97">
    <property type="interactions" value="2106"/>
</dbReference>
<dbReference type="STRING" id="10090.ENSMUSP00000108583"/>
<dbReference type="GlyGen" id="Q8BZ97">
    <property type="glycosylation" value="2 sites, 2 N-linked glycans (2 sites)"/>
</dbReference>
<dbReference type="iPTMnet" id="Q8BZ97"/>
<dbReference type="PhosphoSitePlus" id="Q8BZ97"/>
<dbReference type="PaxDb" id="10090-ENSMUSP00000108583"/>
<dbReference type="ProteomicsDB" id="289888"/>
<dbReference type="ProteomicsDB" id="338987"/>
<dbReference type="Antibodypedia" id="24988">
    <property type="antibodies" value="110 antibodies from 18 providers"/>
</dbReference>
<dbReference type="DNASU" id="77630"/>
<dbReference type="Ensembl" id="ENSMUST00000112959.4">
    <property type="protein sequence ID" value="ENSMUSP00000108583.2"/>
    <property type="gene ID" value="ENSMUSG00000035456.10"/>
</dbReference>
<dbReference type="Ensembl" id="ENSMUST00000210477.2">
    <property type="protein sequence ID" value="ENSMUSP00000147333.2"/>
    <property type="gene ID" value="ENSMUSG00000035456.10"/>
</dbReference>
<dbReference type="GeneID" id="77630"/>
<dbReference type="KEGG" id="mmu:77630"/>
<dbReference type="AGR" id="MGI:1924880"/>
<dbReference type="CTD" id="56978"/>
<dbReference type="MGI" id="MGI:1924880">
    <property type="gene designation" value="Prdm8"/>
</dbReference>
<dbReference type="VEuPathDB" id="HostDB:ENSMUSG00000035456"/>
<dbReference type="eggNOG" id="KOG1721">
    <property type="taxonomic scope" value="Eukaryota"/>
</dbReference>
<dbReference type="eggNOG" id="KOG2461">
    <property type="taxonomic scope" value="Eukaryota"/>
</dbReference>
<dbReference type="GeneTree" id="ENSGT00890000139463"/>
<dbReference type="HOGENOM" id="CLU_034617_1_0_1"/>
<dbReference type="InParanoid" id="Q8BZ97"/>
<dbReference type="OMA" id="VYTTAFW"/>
<dbReference type="OrthoDB" id="5814089at2759"/>
<dbReference type="PhylomeDB" id="Q8BZ97"/>
<dbReference type="TreeFam" id="TF327090"/>
<dbReference type="BioGRID-ORCS" id="77630">
    <property type="hits" value="2 hits in 79 CRISPR screens"/>
</dbReference>
<dbReference type="PRO" id="PR:Q8BZ97"/>
<dbReference type="Proteomes" id="UP000000589">
    <property type="component" value="Chromosome 5"/>
</dbReference>
<dbReference type="RNAct" id="Q8BZ97">
    <property type="molecule type" value="protein"/>
</dbReference>
<dbReference type="Bgee" id="ENSMUSG00000035456">
    <property type="expression patterns" value="Expressed in retinal neural layer and 106 other cell types or tissues"/>
</dbReference>
<dbReference type="GO" id="GO:0035097">
    <property type="term" value="C:histone methyltransferase complex"/>
    <property type="evidence" value="ECO:0000305"/>
    <property type="project" value="MGI"/>
</dbReference>
<dbReference type="GO" id="GO:0016604">
    <property type="term" value="C:nuclear body"/>
    <property type="evidence" value="ECO:0007669"/>
    <property type="project" value="Ensembl"/>
</dbReference>
<dbReference type="GO" id="GO:0005654">
    <property type="term" value="C:nucleoplasm"/>
    <property type="evidence" value="ECO:0000304"/>
    <property type="project" value="Reactome"/>
</dbReference>
<dbReference type="GO" id="GO:0005634">
    <property type="term" value="C:nucleus"/>
    <property type="evidence" value="ECO:0000314"/>
    <property type="project" value="MGI"/>
</dbReference>
<dbReference type="GO" id="GO:0003682">
    <property type="term" value="F:chromatin binding"/>
    <property type="evidence" value="ECO:0000314"/>
    <property type="project" value="MGI"/>
</dbReference>
<dbReference type="GO" id="GO:0003677">
    <property type="term" value="F:DNA binding"/>
    <property type="evidence" value="ECO:0007669"/>
    <property type="project" value="UniProtKB-KW"/>
</dbReference>
<dbReference type="GO" id="GO:0046974">
    <property type="term" value="F:histone H3K9 methyltransferase activity"/>
    <property type="evidence" value="ECO:0000314"/>
    <property type="project" value="MGI"/>
</dbReference>
<dbReference type="GO" id="GO:0042054">
    <property type="term" value="F:histone methyltransferase activity"/>
    <property type="evidence" value="ECO:0000314"/>
    <property type="project" value="MGI"/>
</dbReference>
<dbReference type="GO" id="GO:0003714">
    <property type="term" value="F:transcription corepressor activity"/>
    <property type="evidence" value="ECO:0000315"/>
    <property type="project" value="MGI"/>
</dbReference>
<dbReference type="GO" id="GO:0008270">
    <property type="term" value="F:zinc ion binding"/>
    <property type="evidence" value="ECO:0007669"/>
    <property type="project" value="UniProtKB-KW"/>
</dbReference>
<dbReference type="GO" id="GO:0021952">
    <property type="term" value="P:central nervous system projection neuron axonogenesis"/>
    <property type="evidence" value="ECO:0000315"/>
    <property type="project" value="MGI"/>
</dbReference>
<dbReference type="GO" id="GO:0021540">
    <property type="term" value="P:corpus callosum morphogenesis"/>
    <property type="evidence" value="ECO:0000315"/>
    <property type="project" value="MGI"/>
</dbReference>
<dbReference type="GO" id="GO:0021957">
    <property type="term" value="P:corticospinal tract morphogenesis"/>
    <property type="evidence" value="ECO:0000315"/>
    <property type="project" value="MGI"/>
</dbReference>
<dbReference type="GO" id="GO:0032259">
    <property type="term" value="P:methylation"/>
    <property type="evidence" value="ECO:0007669"/>
    <property type="project" value="UniProtKB-KW"/>
</dbReference>
<dbReference type="GO" id="GO:0045892">
    <property type="term" value="P:negative regulation of DNA-templated transcription"/>
    <property type="evidence" value="ECO:0000314"/>
    <property type="project" value="MGI"/>
</dbReference>
<dbReference type="GO" id="GO:0022008">
    <property type="term" value="P:neurogenesis"/>
    <property type="evidence" value="ECO:0000314"/>
    <property type="project" value="MGI"/>
</dbReference>
<dbReference type="CDD" id="cd19192">
    <property type="entry name" value="PR-SET_PRDM8"/>
    <property type="match status" value="1"/>
</dbReference>
<dbReference type="FunFam" id="2.170.270.10:FF:000012">
    <property type="entry name" value="PR domain zinc finger protein 8"/>
    <property type="match status" value="1"/>
</dbReference>
<dbReference type="Gene3D" id="3.30.160.60">
    <property type="entry name" value="Classic Zinc Finger"/>
    <property type="match status" value="1"/>
</dbReference>
<dbReference type="Gene3D" id="2.170.270.10">
    <property type="entry name" value="SET domain"/>
    <property type="match status" value="1"/>
</dbReference>
<dbReference type="InterPro" id="IPR044402">
    <property type="entry name" value="PRDM8-like_PR/SET"/>
</dbReference>
<dbReference type="InterPro" id="IPR001214">
    <property type="entry name" value="SET_dom"/>
</dbReference>
<dbReference type="InterPro" id="IPR046341">
    <property type="entry name" value="SET_dom_sf"/>
</dbReference>
<dbReference type="InterPro" id="IPR052296">
    <property type="entry name" value="TR-Histone_Methyltrans"/>
</dbReference>
<dbReference type="InterPro" id="IPR036236">
    <property type="entry name" value="Znf_C2H2_sf"/>
</dbReference>
<dbReference type="InterPro" id="IPR013087">
    <property type="entry name" value="Znf_C2H2_type"/>
</dbReference>
<dbReference type="PANTHER" id="PTHR16516">
    <property type="entry name" value="AGAP007109-PA"/>
    <property type="match status" value="1"/>
</dbReference>
<dbReference type="PANTHER" id="PTHR16516:SF7">
    <property type="entry name" value="PR DOMAIN ZINC FINGER PROTEIN 8"/>
    <property type="match status" value="1"/>
</dbReference>
<dbReference type="Pfam" id="PF21549">
    <property type="entry name" value="PRDM2_PR"/>
    <property type="match status" value="1"/>
</dbReference>
<dbReference type="Pfam" id="PF13894">
    <property type="entry name" value="zf-C2H2_4"/>
    <property type="match status" value="1"/>
</dbReference>
<dbReference type="SMART" id="SM00355">
    <property type="entry name" value="ZnF_C2H2"/>
    <property type="match status" value="3"/>
</dbReference>
<dbReference type="SUPFAM" id="SSF57667">
    <property type="entry name" value="beta-beta-alpha zinc fingers"/>
    <property type="match status" value="1"/>
</dbReference>
<dbReference type="PROSITE" id="PS50280">
    <property type="entry name" value="SET"/>
    <property type="match status" value="1"/>
</dbReference>
<dbReference type="PROSITE" id="PS00028">
    <property type="entry name" value="ZINC_FINGER_C2H2_1"/>
    <property type="match status" value="2"/>
</dbReference>
<dbReference type="PROSITE" id="PS50157">
    <property type="entry name" value="ZINC_FINGER_C2H2_2"/>
    <property type="match status" value="2"/>
</dbReference>
<name>PRDM8_MOUSE</name>
<protein>
    <recommendedName>
        <fullName>PR domain zinc finger protein 8</fullName>
        <ecNumber>2.1.1.-</ecNumber>
    </recommendedName>
    <alternativeName>
        <fullName>PR domain-containing protein 8</fullName>
    </alternativeName>
</protein>
<sequence>MEDSGIQRGIWDGDAKAVQQCLTDIFTSVYTTCDIPENAIFGPCVLSHTSLYDSIAFVALKSTDKRTVPYIFRVDTSAANGSSEGLMWLRLVQSARDKEEQNLEAYIKNGQLFYRSLRRIAKDEELLVWYGKELTELLLLCPSRAHKMNGSSPYTCLECSQRFQFEFPYVAHLRFRCPKRLHSTDANPQDEQGGGLGTKDHGGGGGGKEQQQQQQQQQQEAPLIPGPKFCKAGPIHHYPASSPEASNPPGSAGAGSAKPSTDFHNLARELENSRGSSSCVAAPGVGSGGSGHQEAELSPDGVATGGCKGKRRFPEEAAAEGGGAGLAGGRARFSERPLATSKEELVCTPQQYRAAGSYFGLEENGRLFAPPSPETGEAKRSAFVEVKKAGRAVGLQEEAAATDGAGGTAEDPDAGGGVAGGGSNGSSTPAAGSPGAPEKLLAPRPGGSLPGRLEGGSPARGSAFTSVSQLGGGGGAGTAGTAGGSGGGQTAASDERKSAFSQPARSFSQLSPLVLGQKLGALEPCHPGDGVGPTRLYPAAADPLAVKLQGAADLNGACGPLASGGGGGLPKQSPFLYATAFWPKSSAAAAAAAAAAAGPLQLQLPSALTLLPPSFTSLCLPAQNWCAKCNASFRMTSDLVYHMRSHHKKEYAMEPLVKRRREEKLKCPICNESFRERHHLSRHMTSHN</sequence>
<comment type="function">
    <text evidence="5 6 7">Probable histone methyltransferase, preferentially acting on 'Lys-9' of histone H3 (PubMed:19646955). Histone methyltransferase activity has not been confirmed in other species. Involved in the control of steroidogenesis through transcriptional repression of steroidogenesis marker genes such as CYP17A1 and LHCGR (PubMed:19646955). Forms with BHLHE22 a transcriptional repressor complex controlling genes involved in neural development and neuronal differentiation (PubMed:22284184). In the retina, it is required for rod bipolar and type 2 OFF-cone bipolar cell survival (PubMed:26023183).</text>
</comment>
<comment type="subunit">
    <text evidence="1 6">Interacts with BHLHE22 (PubMed:22284184). Interacts with EPM2A and NHLRC1. This interaction sequesters EPM2A and NHLRC1 to the nucleus (By similarity).</text>
</comment>
<comment type="subcellular location">
    <subcellularLocation>
        <location evidence="5">Nucleus</location>
    </subcellularLocation>
</comment>
<comment type="tissue specificity">
    <text evidence="5 6 7">Expressed in brain, heart, liver, testes, retina (PubMed:19646955, PubMed:22284184). Highest expression is observed in the retina and hippocampus; moderately expressed in the cortex and cerebellum. In the retina, it is expressed in bipolar and amacrine cells (PubMed:26023183).</text>
</comment>
<comment type="disruption phenotype">
    <text evidence="6 7">Knockout mice lacking PRDM8 shows absence of the corticospinal tract, agenesis of the corpus callosum and hippocampal commissure; they have an abnormal itching behavior that results in the formation of skin lesions, and occasionally display an unusual movement in which they walk on their forepaws (PubMed:22284184). PRDM8-null mice also have a non-progressive defect in retinal responses, and loss of rod bipolar and type 2 OFF-cone bipolar cells (PubMed:26023183).</text>
</comment>
<comment type="similarity">
    <text evidence="3">Belongs to the class V-like SAM-binding methyltransferase superfamily.</text>
</comment>
<comment type="sequence caution" evidence="8">
    <conflict type="frameshift">
        <sequence resource="EMBL-CDS" id="BAC29345"/>
    </conflict>
</comment>
<proteinExistence type="evidence at protein level"/>
<reference key="1">
    <citation type="journal article" date="2009" name="PLoS Biol.">
        <title>Lineage-specific biology revealed by a finished genome assembly of the mouse.</title>
        <authorList>
            <person name="Church D.M."/>
            <person name="Goodstadt L."/>
            <person name="Hillier L.W."/>
            <person name="Zody M.C."/>
            <person name="Goldstein S."/>
            <person name="She X."/>
            <person name="Bult C.J."/>
            <person name="Agarwala R."/>
            <person name="Cherry J.L."/>
            <person name="DiCuccio M."/>
            <person name="Hlavina W."/>
            <person name="Kapustin Y."/>
            <person name="Meric P."/>
            <person name="Maglott D."/>
            <person name="Birtle Z."/>
            <person name="Marques A.C."/>
            <person name="Graves T."/>
            <person name="Zhou S."/>
            <person name="Teague B."/>
            <person name="Potamousis K."/>
            <person name="Churas C."/>
            <person name="Place M."/>
            <person name="Herschleb J."/>
            <person name="Runnheim R."/>
            <person name="Forrest D."/>
            <person name="Amos-Landgraf J."/>
            <person name="Schwartz D.C."/>
            <person name="Cheng Z."/>
            <person name="Lindblad-Toh K."/>
            <person name="Eichler E.E."/>
            <person name="Ponting C.P."/>
        </authorList>
    </citation>
    <scope>NUCLEOTIDE SEQUENCE [LARGE SCALE GENOMIC DNA]</scope>
    <source>
        <strain>C57BL/6J</strain>
    </source>
</reference>
<reference key="2">
    <citation type="journal article" date="2005" name="Science">
        <title>The transcriptional landscape of the mammalian genome.</title>
        <authorList>
            <person name="Carninci P."/>
            <person name="Kasukawa T."/>
            <person name="Katayama S."/>
            <person name="Gough J."/>
            <person name="Frith M.C."/>
            <person name="Maeda N."/>
            <person name="Oyama R."/>
            <person name="Ravasi T."/>
            <person name="Lenhard B."/>
            <person name="Wells C."/>
            <person name="Kodzius R."/>
            <person name="Shimokawa K."/>
            <person name="Bajic V.B."/>
            <person name="Brenner S.E."/>
            <person name="Batalov S."/>
            <person name="Forrest A.R."/>
            <person name="Zavolan M."/>
            <person name="Davis M.J."/>
            <person name="Wilming L.G."/>
            <person name="Aidinis V."/>
            <person name="Allen J.E."/>
            <person name="Ambesi-Impiombato A."/>
            <person name="Apweiler R."/>
            <person name="Aturaliya R.N."/>
            <person name="Bailey T.L."/>
            <person name="Bansal M."/>
            <person name="Baxter L."/>
            <person name="Beisel K.W."/>
            <person name="Bersano T."/>
            <person name="Bono H."/>
            <person name="Chalk A.M."/>
            <person name="Chiu K.P."/>
            <person name="Choudhary V."/>
            <person name="Christoffels A."/>
            <person name="Clutterbuck D.R."/>
            <person name="Crowe M.L."/>
            <person name="Dalla E."/>
            <person name="Dalrymple B.P."/>
            <person name="de Bono B."/>
            <person name="Della Gatta G."/>
            <person name="di Bernardo D."/>
            <person name="Down T."/>
            <person name="Engstrom P."/>
            <person name="Fagiolini M."/>
            <person name="Faulkner G."/>
            <person name="Fletcher C.F."/>
            <person name="Fukushima T."/>
            <person name="Furuno M."/>
            <person name="Futaki S."/>
            <person name="Gariboldi M."/>
            <person name="Georgii-Hemming P."/>
            <person name="Gingeras T.R."/>
            <person name="Gojobori T."/>
            <person name="Green R.E."/>
            <person name="Gustincich S."/>
            <person name="Harbers M."/>
            <person name="Hayashi Y."/>
            <person name="Hensch T.K."/>
            <person name="Hirokawa N."/>
            <person name="Hill D."/>
            <person name="Huminiecki L."/>
            <person name="Iacono M."/>
            <person name="Ikeo K."/>
            <person name="Iwama A."/>
            <person name="Ishikawa T."/>
            <person name="Jakt M."/>
            <person name="Kanapin A."/>
            <person name="Katoh M."/>
            <person name="Kawasawa Y."/>
            <person name="Kelso J."/>
            <person name="Kitamura H."/>
            <person name="Kitano H."/>
            <person name="Kollias G."/>
            <person name="Krishnan S.P."/>
            <person name="Kruger A."/>
            <person name="Kummerfeld S.K."/>
            <person name="Kurochkin I.V."/>
            <person name="Lareau L.F."/>
            <person name="Lazarevic D."/>
            <person name="Lipovich L."/>
            <person name="Liu J."/>
            <person name="Liuni S."/>
            <person name="McWilliam S."/>
            <person name="Madan Babu M."/>
            <person name="Madera M."/>
            <person name="Marchionni L."/>
            <person name="Matsuda H."/>
            <person name="Matsuzawa S."/>
            <person name="Miki H."/>
            <person name="Mignone F."/>
            <person name="Miyake S."/>
            <person name="Morris K."/>
            <person name="Mottagui-Tabar S."/>
            <person name="Mulder N."/>
            <person name="Nakano N."/>
            <person name="Nakauchi H."/>
            <person name="Ng P."/>
            <person name="Nilsson R."/>
            <person name="Nishiguchi S."/>
            <person name="Nishikawa S."/>
            <person name="Nori F."/>
            <person name="Ohara O."/>
            <person name="Okazaki Y."/>
            <person name="Orlando V."/>
            <person name="Pang K.C."/>
            <person name="Pavan W.J."/>
            <person name="Pavesi G."/>
            <person name="Pesole G."/>
            <person name="Petrovsky N."/>
            <person name="Piazza S."/>
            <person name="Reed J."/>
            <person name="Reid J.F."/>
            <person name="Ring B.Z."/>
            <person name="Ringwald M."/>
            <person name="Rost B."/>
            <person name="Ruan Y."/>
            <person name="Salzberg S.L."/>
            <person name="Sandelin A."/>
            <person name="Schneider C."/>
            <person name="Schoenbach C."/>
            <person name="Sekiguchi K."/>
            <person name="Semple C.A."/>
            <person name="Seno S."/>
            <person name="Sessa L."/>
            <person name="Sheng Y."/>
            <person name="Shibata Y."/>
            <person name="Shimada H."/>
            <person name="Shimada K."/>
            <person name="Silva D."/>
            <person name="Sinclair B."/>
            <person name="Sperling S."/>
            <person name="Stupka E."/>
            <person name="Sugiura K."/>
            <person name="Sultana R."/>
            <person name="Takenaka Y."/>
            <person name="Taki K."/>
            <person name="Tammoja K."/>
            <person name="Tan S.L."/>
            <person name="Tang S."/>
            <person name="Taylor M.S."/>
            <person name="Tegner J."/>
            <person name="Teichmann S.A."/>
            <person name="Ueda H.R."/>
            <person name="van Nimwegen E."/>
            <person name="Verardo R."/>
            <person name="Wei C.L."/>
            <person name="Yagi K."/>
            <person name="Yamanishi H."/>
            <person name="Zabarovsky E."/>
            <person name="Zhu S."/>
            <person name="Zimmer A."/>
            <person name="Hide W."/>
            <person name="Bult C."/>
            <person name="Grimmond S.M."/>
            <person name="Teasdale R.D."/>
            <person name="Liu E.T."/>
            <person name="Brusic V."/>
            <person name="Quackenbush J."/>
            <person name="Wahlestedt C."/>
            <person name="Mattick J.S."/>
            <person name="Hume D.A."/>
            <person name="Kai C."/>
            <person name="Sasaki D."/>
            <person name="Tomaru Y."/>
            <person name="Fukuda S."/>
            <person name="Kanamori-Katayama M."/>
            <person name="Suzuki M."/>
            <person name="Aoki J."/>
            <person name="Arakawa T."/>
            <person name="Iida J."/>
            <person name="Imamura K."/>
            <person name="Itoh M."/>
            <person name="Kato T."/>
            <person name="Kawaji H."/>
            <person name="Kawagashira N."/>
            <person name="Kawashima T."/>
            <person name="Kojima M."/>
            <person name="Kondo S."/>
            <person name="Konno H."/>
            <person name="Nakano K."/>
            <person name="Ninomiya N."/>
            <person name="Nishio T."/>
            <person name="Okada M."/>
            <person name="Plessy C."/>
            <person name="Shibata K."/>
            <person name="Shiraki T."/>
            <person name="Suzuki S."/>
            <person name="Tagami M."/>
            <person name="Waki K."/>
            <person name="Watahiki A."/>
            <person name="Okamura-Oho Y."/>
            <person name="Suzuki H."/>
            <person name="Kawai J."/>
            <person name="Hayashizaki Y."/>
        </authorList>
    </citation>
    <scope>NUCLEOTIDE SEQUENCE [LARGE SCALE MRNA]</scope>
    <source>
        <strain>C57BL/6J</strain>
        <tissue>Cerebellum</tissue>
    </source>
</reference>
<reference key="3">
    <citation type="journal article" date="2004" name="Genome Res.">
        <title>The status, quality, and expansion of the NIH full-length cDNA project: the Mammalian Gene Collection (MGC).</title>
        <authorList>
            <consortium name="The MGC Project Team"/>
        </authorList>
    </citation>
    <scope>NUCLEOTIDE SEQUENCE [LARGE SCALE MRNA]</scope>
    <source>
        <tissue evidence="9">Brain</tissue>
    </source>
</reference>
<reference key="4">
    <citation type="journal article" date="2009" name="Biochem. Biophys. Res. Commun.">
        <title>Histone methyltransferase PRDM8 regulates mouse testis steroidogenesis.</title>
        <authorList>
            <person name="Eom G.H."/>
            <person name="Kim K."/>
            <person name="Kim S.M."/>
            <person name="Kee H.J."/>
            <person name="Kim J.Y."/>
            <person name="Jin H.M."/>
            <person name="Kim J.R."/>
            <person name="Kim J.H."/>
            <person name="Choe N."/>
            <person name="Kim K.B."/>
            <person name="Lee J."/>
            <person name="Kook H."/>
            <person name="Kim N."/>
            <person name="Seo S.B."/>
        </authorList>
    </citation>
    <scope>FUNCTION</scope>
    <scope>TISSUE SPECIFICITY</scope>
    <scope>SUBCELLULAR LOCATION</scope>
</reference>
<reference key="5">
    <citation type="journal article" date="2012" name="Neuron">
        <title>Bhlhb5 and Prdm8 form a repressor complex involved in neuronal circuit assembly.</title>
        <authorList>
            <person name="Ross S.E."/>
            <person name="McCord A.E."/>
            <person name="Jung C."/>
            <person name="Atan D."/>
            <person name="Mok S.I."/>
            <person name="Hemberg M."/>
            <person name="Kim T.K."/>
            <person name="Salogiannis J."/>
            <person name="Hu L."/>
            <person name="Cohen S."/>
            <person name="Lin Y."/>
            <person name="Harrar D."/>
            <person name="McInnes R.R."/>
            <person name="Greenberg M.E."/>
        </authorList>
    </citation>
    <scope>FUNCTION</scope>
    <scope>DISRUPTION PHENOTYPE</scope>
    <scope>TISSUE SPECIFICITY</scope>
    <scope>INTERACTION WITH BHLHE22</scope>
</reference>
<reference key="6">
    <citation type="journal article" date="2015" name="Proc. Natl. Acad. Sci. U.S.A.">
        <title>Transcription factor PRDM8 is required for rod bipolar and type 2 OFF-cone bipolar cell survival and amacrine subtype identity.</title>
        <authorList>
            <person name="Jung C.C."/>
            <person name="Atan D."/>
            <person name="Ng D."/>
            <person name="Ploder L."/>
            <person name="Ross S.E."/>
            <person name="Klein M."/>
            <person name="Birch D.G."/>
            <person name="Diez E."/>
            <person name="McInnes R.R."/>
        </authorList>
    </citation>
    <scope>TISSUE SPECIFICITY</scope>
    <scope>DISRUPTION PHENOTYPE</scope>
    <scope>FUNCTION</scope>
</reference>
<accession>Q8BZ97</accession>
<accession>B2RU90</accession>
<feature type="chain" id="PRO_0000047765" description="PR domain zinc finger protein 8">
    <location>
        <begin position="1"/>
        <end position="688"/>
    </location>
</feature>
<feature type="domain" description="SET" evidence="3">
    <location>
        <begin position="16"/>
        <end position="131"/>
    </location>
</feature>
<feature type="zinc finger region" description="C2H2-type 1" evidence="2">
    <location>
        <begin position="154"/>
        <end position="182"/>
    </location>
</feature>
<feature type="zinc finger region" description="C2H2-type 2" evidence="2">
    <location>
        <begin position="624"/>
        <end position="647"/>
    </location>
</feature>
<feature type="zinc finger region" description="C2H2-type 3" evidence="2">
    <location>
        <begin position="665"/>
        <end position="687"/>
    </location>
</feature>
<feature type="region of interest" description="Disordered" evidence="4">
    <location>
        <begin position="184"/>
        <end position="309"/>
    </location>
</feature>
<feature type="region of interest" description="Disordered" evidence="4">
    <location>
        <begin position="397"/>
        <end position="506"/>
    </location>
</feature>
<feature type="compositionally biased region" description="Gly residues" evidence="4">
    <location>
        <begin position="192"/>
        <end position="208"/>
    </location>
</feature>
<feature type="compositionally biased region" description="Low complexity" evidence="4">
    <location>
        <begin position="209"/>
        <end position="219"/>
    </location>
</feature>
<feature type="compositionally biased region" description="Low complexity" evidence="4">
    <location>
        <begin position="275"/>
        <end position="284"/>
    </location>
</feature>
<feature type="compositionally biased region" description="Gly residues" evidence="4">
    <location>
        <begin position="414"/>
        <end position="424"/>
    </location>
</feature>
<feature type="compositionally biased region" description="Gly residues" evidence="4">
    <location>
        <begin position="470"/>
        <end position="489"/>
    </location>
</feature>
<feature type="binding site" evidence="3">
    <location>
        <position position="130"/>
    </location>
    <ligand>
        <name>S-adenosyl-L-methionine</name>
        <dbReference type="ChEBI" id="CHEBI:59789"/>
    </ligand>
</feature>
<feature type="sequence conflict" description="In Ref. 2; BAC29345." evidence="8" ref="2">
    <original>G</original>
    <variation>S</variation>
    <location>
        <position position="255"/>
    </location>
</feature>
<feature type="sequence conflict" description="In Ref. 2; BAC29345." evidence="8" ref="2">
    <original>S</original>
    <variation>N</variation>
    <location>
        <position position="276"/>
    </location>
</feature>
<gene>
    <name type="primary">Prdm8</name>
</gene>